<comment type="function">
    <text evidence="1">Required for the assembly and/or stability of the 40S ribosomal subunit. Required for the processing of the 20S rRNA-precursor to mature 18S rRNA in a late step of the maturation of 40S ribosomal subunits. Required during oogenesis and imaginal development.</text>
</comment>
<comment type="subunit">
    <text evidence="1">Component of the small ribosomal subunit. Mature ribosomes consist of a small (40S) and a large (60S) subunit. The 40S subunit contains about 33 different proteins and 1 molecule of RNA (18S). The 60S subunit contains about 49 different proteins and 3 molecules of RNA (28S, 5.8S and 5S). Interacts with oho23B/rpS21.</text>
</comment>
<comment type="subcellular location">
    <subcellularLocation>
        <location evidence="1">Cytoplasm</location>
    </subcellularLocation>
    <subcellularLocation>
        <location evidence="1">Nucleus</location>
    </subcellularLocation>
    <text evidence="1">May associate with nascent RNP complexes within the nucleus.</text>
</comment>
<comment type="similarity">
    <text evidence="1">Belongs to the universal ribosomal protein uS2 family.</text>
</comment>
<proteinExistence type="inferred from homology"/>
<protein>
    <recommendedName>
        <fullName evidence="1">Small ribosomal subunit protein uS2</fullName>
    </recommendedName>
    <alternativeName>
        <fullName evidence="3">40S ribosomal protein SA</fullName>
    </alternativeName>
    <alternativeName>
        <fullName evidence="1">Protein stubarista</fullName>
    </alternativeName>
</protein>
<evidence type="ECO:0000255" key="1">
    <source>
        <dbReference type="HAMAP-Rule" id="MF_03015"/>
    </source>
</evidence>
<evidence type="ECO:0000256" key="2">
    <source>
        <dbReference type="SAM" id="MobiDB-lite"/>
    </source>
</evidence>
<evidence type="ECO:0000305" key="3"/>
<keyword id="KW-0963">Cytoplasm</keyword>
<keyword id="KW-0217">Developmental protein</keyword>
<keyword id="KW-0539">Nucleus</keyword>
<keyword id="KW-1185">Reference proteome</keyword>
<keyword id="KW-0687">Ribonucleoprotein</keyword>
<keyword id="KW-0689">Ribosomal protein</keyword>
<name>RSSA_DROGR</name>
<reference key="1">
    <citation type="journal article" date="2007" name="Nature">
        <title>Evolution of genes and genomes on the Drosophila phylogeny.</title>
        <authorList>
            <consortium name="Drosophila 12 genomes consortium"/>
        </authorList>
    </citation>
    <scope>NUCLEOTIDE SEQUENCE [LARGE SCALE GENOMIC DNA]</scope>
    <source>
        <strain>Tucson 15287-2541.00</strain>
    </source>
</reference>
<organism>
    <name type="scientific">Drosophila grimshawi</name>
    <name type="common">Hawaiian fruit fly</name>
    <name type="synonym">Idiomyia grimshawi</name>
    <dbReference type="NCBI Taxonomy" id="7222"/>
    <lineage>
        <taxon>Eukaryota</taxon>
        <taxon>Metazoa</taxon>
        <taxon>Ecdysozoa</taxon>
        <taxon>Arthropoda</taxon>
        <taxon>Hexapoda</taxon>
        <taxon>Insecta</taxon>
        <taxon>Pterygota</taxon>
        <taxon>Neoptera</taxon>
        <taxon>Endopterygota</taxon>
        <taxon>Diptera</taxon>
        <taxon>Brachycera</taxon>
        <taxon>Muscomorpha</taxon>
        <taxon>Ephydroidea</taxon>
        <taxon>Drosophilidae</taxon>
        <taxon>Drosophila</taxon>
        <taxon>Hawaiian Drosophila</taxon>
    </lineage>
</organism>
<sequence>MSGGLDILSLKEDDITKMLVATTHLGSENVNFQMEQYVFKRRADGVNIINLGKTWEKLVLAARAIVAIENASDVFVISSRPIGQRAVLKFAKYTDTTPIAGRFTPGAFTNQIQPAFREPRLLVVTDPNTDHQPIMEASYVNIPVIAFTNTDSPLRYIDIAIPCNNKSPHSIGLMWWLLAREVLRLRGTISRTTEWPVVVDLFFYRDPEEAEKEEAAAAKELLPPPKVEEAVDHPVEETTNWADEVAAETVGGGVEDWNEDTVKTSWGSDGQF</sequence>
<feature type="initiator methionine" description="Removed" evidence="1">
    <location>
        <position position="1"/>
    </location>
</feature>
<feature type="chain" id="PRO_0000371582" description="Small ribosomal subunit protein uS2">
    <location>
        <begin position="2"/>
        <end position="272"/>
    </location>
</feature>
<feature type="region of interest" description="Disordered" evidence="2">
    <location>
        <begin position="250"/>
        <end position="272"/>
    </location>
</feature>
<feature type="compositionally biased region" description="Polar residues" evidence="2">
    <location>
        <begin position="263"/>
        <end position="272"/>
    </location>
</feature>
<dbReference type="EMBL" id="CH916376">
    <property type="protein sequence ID" value="EDV95444.1"/>
    <property type="molecule type" value="Genomic_DNA"/>
</dbReference>
<dbReference type="SMR" id="B4JXG8"/>
<dbReference type="FunCoup" id="B4JXG8">
    <property type="interactions" value="1281"/>
</dbReference>
<dbReference type="STRING" id="7222.B4JXG8"/>
<dbReference type="EnsemblMetazoa" id="FBtr0152988">
    <property type="protein sequence ID" value="FBpp0151480"/>
    <property type="gene ID" value="FBgn0125044"/>
</dbReference>
<dbReference type="EnsemblMetazoa" id="XM_001995756.2">
    <property type="protein sequence ID" value="XP_001995792.1"/>
    <property type="gene ID" value="LOC6569427"/>
</dbReference>
<dbReference type="GeneID" id="6569427"/>
<dbReference type="KEGG" id="dgr:6569427"/>
<dbReference type="CTD" id="104044"/>
<dbReference type="eggNOG" id="KOG0830">
    <property type="taxonomic scope" value="Eukaryota"/>
</dbReference>
<dbReference type="HOGENOM" id="CLU_058171_1_0_1"/>
<dbReference type="InParanoid" id="B4JXG8"/>
<dbReference type="OMA" id="VKNFFEP"/>
<dbReference type="OrthoDB" id="414863at2759"/>
<dbReference type="PhylomeDB" id="B4JXG8"/>
<dbReference type="ChiTaRS" id="sta">
    <property type="organism name" value="fly"/>
</dbReference>
<dbReference type="Proteomes" id="UP000001070">
    <property type="component" value="Unassembled WGS sequence"/>
</dbReference>
<dbReference type="GO" id="GO:0022627">
    <property type="term" value="C:cytosolic small ribosomal subunit"/>
    <property type="evidence" value="ECO:0007669"/>
    <property type="project" value="UniProtKB-UniRule"/>
</dbReference>
<dbReference type="GO" id="GO:0005634">
    <property type="term" value="C:nucleus"/>
    <property type="evidence" value="ECO:0007669"/>
    <property type="project" value="UniProtKB-SubCell"/>
</dbReference>
<dbReference type="GO" id="GO:0043022">
    <property type="term" value="F:ribosome binding"/>
    <property type="evidence" value="ECO:0007669"/>
    <property type="project" value="EnsemblMetazoa"/>
</dbReference>
<dbReference type="GO" id="GO:0003735">
    <property type="term" value="F:structural constituent of ribosome"/>
    <property type="evidence" value="ECO:0007669"/>
    <property type="project" value="UniProtKB-UniRule"/>
</dbReference>
<dbReference type="GO" id="GO:0000028">
    <property type="term" value="P:ribosomal small subunit assembly"/>
    <property type="evidence" value="ECO:0007669"/>
    <property type="project" value="UniProtKB-UniRule"/>
</dbReference>
<dbReference type="GO" id="GO:0006412">
    <property type="term" value="P:translation"/>
    <property type="evidence" value="ECO:0007669"/>
    <property type="project" value="UniProtKB-UniRule"/>
</dbReference>
<dbReference type="CDD" id="cd01425">
    <property type="entry name" value="RPS2"/>
    <property type="match status" value="1"/>
</dbReference>
<dbReference type="FunFam" id="3.40.50.10490:FF:000012">
    <property type="entry name" value="40S ribosomal protein SA"/>
    <property type="match status" value="1"/>
</dbReference>
<dbReference type="Gene3D" id="3.40.50.10490">
    <property type="entry name" value="Glucose-6-phosphate isomerase like protein, domain 1"/>
    <property type="match status" value="1"/>
</dbReference>
<dbReference type="HAMAP" id="MF_03015">
    <property type="entry name" value="Ribosomal_S2_euk"/>
    <property type="match status" value="1"/>
</dbReference>
<dbReference type="InterPro" id="IPR001865">
    <property type="entry name" value="Ribosomal_uS2"/>
</dbReference>
<dbReference type="InterPro" id="IPR032281">
    <property type="entry name" value="Ribosomal_uS2_C"/>
</dbReference>
<dbReference type="InterPro" id="IPR018130">
    <property type="entry name" value="Ribosomal_uS2_CS"/>
</dbReference>
<dbReference type="InterPro" id="IPR027498">
    <property type="entry name" value="Ribosomal_uS2_euk"/>
</dbReference>
<dbReference type="InterPro" id="IPR005707">
    <property type="entry name" value="Ribosomal_uS2_euk/arc"/>
</dbReference>
<dbReference type="InterPro" id="IPR023591">
    <property type="entry name" value="Ribosomal_uS2_flav_dom_sf"/>
</dbReference>
<dbReference type="NCBIfam" id="TIGR01012">
    <property type="entry name" value="uS2_euk_arch"/>
    <property type="match status" value="1"/>
</dbReference>
<dbReference type="PANTHER" id="PTHR11489">
    <property type="entry name" value="40S RIBOSOMAL PROTEIN SA"/>
    <property type="match status" value="1"/>
</dbReference>
<dbReference type="Pfam" id="PF16122">
    <property type="entry name" value="40S_SA_C"/>
    <property type="match status" value="1"/>
</dbReference>
<dbReference type="Pfam" id="PF00318">
    <property type="entry name" value="Ribosomal_S2"/>
    <property type="match status" value="2"/>
</dbReference>
<dbReference type="PRINTS" id="PR00395">
    <property type="entry name" value="RIBOSOMALS2"/>
</dbReference>
<dbReference type="SUPFAM" id="SSF52313">
    <property type="entry name" value="Ribosomal protein S2"/>
    <property type="match status" value="1"/>
</dbReference>
<dbReference type="PROSITE" id="PS00962">
    <property type="entry name" value="RIBOSOMAL_S2_1"/>
    <property type="match status" value="1"/>
</dbReference>
<dbReference type="PROSITE" id="PS00963">
    <property type="entry name" value="RIBOSOMAL_S2_2"/>
    <property type="match status" value="1"/>
</dbReference>
<accession>B4JXG8</accession>
<gene>
    <name evidence="1" type="primary">sta</name>
    <name type="ORF">GH17574</name>
</gene>